<feature type="chain" id="PRO_0000145770" description="2-phospho-L-lactate transferase">
    <location>
        <begin position="1"/>
        <end position="336"/>
    </location>
</feature>
<feature type="binding site" evidence="1">
    <location>
        <position position="49"/>
    </location>
    <ligand>
        <name>7,8-didemethyl-8-hydroxy-5-deazariboflavin</name>
        <dbReference type="ChEBI" id="CHEBI:59904"/>
    </ligand>
</feature>
<name>COFD_HALSA</name>
<keyword id="KW-0460">Magnesium</keyword>
<keyword id="KW-1185">Reference proteome</keyword>
<keyword id="KW-0808">Transferase</keyword>
<proteinExistence type="inferred from homology"/>
<organism>
    <name type="scientific">Halobacterium salinarum (strain ATCC 700922 / JCM 11081 / NRC-1)</name>
    <name type="common">Halobacterium halobium</name>
    <dbReference type="NCBI Taxonomy" id="64091"/>
    <lineage>
        <taxon>Archaea</taxon>
        <taxon>Methanobacteriati</taxon>
        <taxon>Methanobacteriota</taxon>
        <taxon>Stenosarchaea group</taxon>
        <taxon>Halobacteria</taxon>
        <taxon>Halobacteriales</taxon>
        <taxon>Halobacteriaceae</taxon>
        <taxon>Halobacterium</taxon>
        <taxon>Halobacterium salinarum NRC-34001</taxon>
    </lineage>
</organism>
<comment type="function">
    <text evidence="1">Catalyzes the transfer of the 2-phospholactate moiety from (2S)-lactyl-2-diphospho-5'-guanosine to 7,8-didemethyl-8-hydroxy-5-deazariboflavin (FO) with the formation of oxidized coenzyme F420-0 and GMP.</text>
</comment>
<comment type="catalytic activity">
    <reaction evidence="1">
        <text>(2S)-lactyl-2-diphospho-5'-guanosine + 7,8-didemethyl-8-hydroxy-5-deazariboflavin = oxidized coenzyme F420-0 + GMP + H(+)</text>
        <dbReference type="Rhea" id="RHEA:63444"/>
        <dbReference type="ChEBI" id="CHEBI:15378"/>
        <dbReference type="ChEBI" id="CHEBI:58115"/>
        <dbReference type="ChEBI" id="CHEBI:59435"/>
        <dbReference type="ChEBI" id="CHEBI:59904"/>
        <dbReference type="ChEBI" id="CHEBI:59907"/>
        <dbReference type="EC" id="2.7.8.28"/>
    </reaction>
</comment>
<comment type="cofactor">
    <cofactor evidence="1">
        <name>Mg(2+)</name>
        <dbReference type="ChEBI" id="CHEBI:18420"/>
    </cofactor>
</comment>
<comment type="pathway">
    <text evidence="1">Cofactor biosynthesis; coenzyme F420 biosynthesis.</text>
</comment>
<comment type="subunit">
    <text evidence="1">Homodimer.</text>
</comment>
<comment type="similarity">
    <text evidence="1">Belongs to the CofD family.</text>
</comment>
<sequence length="336" mass="35468">MTTFLAGGTGTPKLLAGARRVFDPAETTVVGNTGDDVALGGLLVCPDLDTVLFEGGGVLDRETWWGIADDGSTTHDYLTDLAAAADIDPDTPRYLPDDAQTAGRDIARWRRFSAASEFMFIGDRDRAVHTLRAGLLDEGHTLTEVTRRLADAFDLSVDLVPMSNDPVATIVQTPDGEQHFQTFWVAEHGDPTVEDVEFRGGERATAAQPAIEAIRDGPVVVGPSNPVTSIGPMLALDGIADALRDAQVVAVSPFVEDEVFSGPAAKLMAAVGHDPSTAGVADAYDFADAFVLDTADSTDLDRPVVRTDTSLDTEADAERVARACRDALVAASGEVT</sequence>
<reference key="1">
    <citation type="journal article" date="2000" name="Proc. Natl. Acad. Sci. U.S.A.">
        <title>Genome sequence of Halobacterium species NRC-1.</title>
        <authorList>
            <person name="Ng W.V."/>
            <person name="Kennedy S.P."/>
            <person name="Mahairas G.G."/>
            <person name="Berquist B."/>
            <person name="Pan M."/>
            <person name="Shukla H.D."/>
            <person name="Lasky S.R."/>
            <person name="Baliga N.S."/>
            <person name="Thorsson V."/>
            <person name="Sbrogna J."/>
            <person name="Swartzell S."/>
            <person name="Weir D."/>
            <person name="Hall J."/>
            <person name="Dahl T.A."/>
            <person name="Welti R."/>
            <person name="Goo Y.A."/>
            <person name="Leithauser B."/>
            <person name="Keller K."/>
            <person name="Cruz R."/>
            <person name="Danson M.J."/>
            <person name="Hough D.W."/>
            <person name="Maddocks D.G."/>
            <person name="Jablonski P.E."/>
            <person name="Krebs M.P."/>
            <person name="Angevine C.M."/>
            <person name="Dale H."/>
            <person name="Isenbarger T.A."/>
            <person name="Peck R.F."/>
            <person name="Pohlschroder M."/>
            <person name="Spudich J.L."/>
            <person name="Jung K.-H."/>
            <person name="Alam M."/>
            <person name="Freitas T."/>
            <person name="Hou S."/>
            <person name="Daniels C.J."/>
            <person name="Dennis P.P."/>
            <person name="Omer A.D."/>
            <person name="Ebhardt H."/>
            <person name="Lowe T.M."/>
            <person name="Liang P."/>
            <person name="Riley M."/>
            <person name="Hood L."/>
            <person name="DasSarma S."/>
        </authorList>
    </citation>
    <scope>NUCLEOTIDE SEQUENCE [LARGE SCALE GENOMIC DNA]</scope>
    <source>
        <strain>ATCC 700922 / JCM 11081 / NRC-1</strain>
    </source>
</reference>
<protein>
    <recommendedName>
        <fullName evidence="1">2-phospho-L-lactate transferase</fullName>
        <ecNumber evidence="1">2.7.8.28</ecNumber>
    </recommendedName>
</protein>
<dbReference type="EC" id="2.7.8.28" evidence="1"/>
<dbReference type="EMBL" id="AE004437">
    <property type="protein sequence ID" value="AAG19743.1"/>
    <property type="molecule type" value="Genomic_DNA"/>
</dbReference>
<dbReference type="PIR" id="C84297">
    <property type="entry name" value="C84297"/>
</dbReference>
<dbReference type="RefSeq" id="WP_010903040.1">
    <property type="nucleotide sequence ID" value="NC_002607.1"/>
</dbReference>
<dbReference type="SMR" id="Q9HPX4"/>
<dbReference type="FunCoup" id="Q9HPX4">
    <property type="interactions" value="67"/>
</dbReference>
<dbReference type="STRING" id="64091.VNG_1429C"/>
<dbReference type="PaxDb" id="64091-VNG_1429C"/>
<dbReference type="GeneID" id="68694151"/>
<dbReference type="KEGG" id="hal:VNG_1429C"/>
<dbReference type="PATRIC" id="fig|64091.14.peg.1093"/>
<dbReference type="HOGENOM" id="CLU_055795_1_0_2"/>
<dbReference type="InParanoid" id="Q9HPX4"/>
<dbReference type="OrthoDB" id="59563at2157"/>
<dbReference type="PhylomeDB" id="Q9HPX4"/>
<dbReference type="UniPathway" id="UPA00071"/>
<dbReference type="Proteomes" id="UP000000554">
    <property type="component" value="Chromosome"/>
</dbReference>
<dbReference type="GO" id="GO:0043743">
    <property type="term" value="F:LPPG:FO 2-phospho-L-lactate transferase activity"/>
    <property type="evidence" value="ECO:0000318"/>
    <property type="project" value="GO_Central"/>
</dbReference>
<dbReference type="GO" id="GO:0000287">
    <property type="term" value="F:magnesium ion binding"/>
    <property type="evidence" value="ECO:0007669"/>
    <property type="project" value="InterPro"/>
</dbReference>
<dbReference type="GO" id="GO:0052645">
    <property type="term" value="P:F420-0 metabolic process"/>
    <property type="evidence" value="ECO:0007669"/>
    <property type="project" value="UniProtKB-UniRule"/>
</dbReference>
<dbReference type="CDD" id="cd07186">
    <property type="entry name" value="CofD_like"/>
    <property type="match status" value="1"/>
</dbReference>
<dbReference type="Gene3D" id="1.10.8.240">
    <property type="entry name" value="CofD-like domain"/>
    <property type="match status" value="2"/>
</dbReference>
<dbReference type="Gene3D" id="3.40.50.10680">
    <property type="entry name" value="CofD-like domains"/>
    <property type="match status" value="2"/>
</dbReference>
<dbReference type="HAMAP" id="MF_01257">
    <property type="entry name" value="CofD"/>
    <property type="match status" value="1"/>
</dbReference>
<dbReference type="InterPro" id="IPR002882">
    <property type="entry name" value="CofD"/>
</dbReference>
<dbReference type="InterPro" id="IPR038136">
    <property type="entry name" value="CofD-like_dom_sf"/>
</dbReference>
<dbReference type="InterPro" id="IPR010115">
    <property type="entry name" value="FbiA/CofD"/>
</dbReference>
<dbReference type="NCBIfam" id="TIGR01819">
    <property type="entry name" value="F420_cofD"/>
    <property type="match status" value="1"/>
</dbReference>
<dbReference type="PANTHER" id="PTHR43007">
    <property type="entry name" value="2-PHOSPHO-L-LACTATE TRANSFERASE"/>
    <property type="match status" value="1"/>
</dbReference>
<dbReference type="PANTHER" id="PTHR43007:SF1">
    <property type="entry name" value="2-PHOSPHO-L-LACTATE TRANSFERASE"/>
    <property type="match status" value="1"/>
</dbReference>
<dbReference type="Pfam" id="PF01933">
    <property type="entry name" value="CofD"/>
    <property type="match status" value="1"/>
</dbReference>
<dbReference type="SUPFAM" id="SSF142338">
    <property type="entry name" value="CofD-like"/>
    <property type="match status" value="1"/>
</dbReference>
<gene>
    <name evidence="1" type="primary">cofD</name>
    <name type="ordered locus">VNG_1429C</name>
</gene>
<accession>Q9HPX4</accession>
<evidence type="ECO:0000255" key="1">
    <source>
        <dbReference type="HAMAP-Rule" id="MF_01257"/>
    </source>
</evidence>